<protein>
    <recommendedName>
        <fullName evidence="1">Aldo-keto reductase MUL_1987</fullName>
        <ecNumber evidence="1">1.1.1.-</ecNumber>
    </recommendedName>
</protein>
<name>Y1987_MYCUA</name>
<reference key="1">
    <citation type="journal article" date="2007" name="Genome Res.">
        <title>Reductive evolution and niche adaptation inferred from the genome of Mycobacterium ulcerans, the causative agent of Buruli ulcer.</title>
        <authorList>
            <person name="Stinear T.P."/>
            <person name="Seemann T."/>
            <person name="Pidot S."/>
            <person name="Frigui W."/>
            <person name="Reysset G."/>
            <person name="Garnier T."/>
            <person name="Meurice G."/>
            <person name="Simon D."/>
            <person name="Bouchier C."/>
            <person name="Ma L."/>
            <person name="Tichit M."/>
            <person name="Porter J.L."/>
            <person name="Ryan J."/>
            <person name="Johnson P.D.R."/>
            <person name="Davies J.K."/>
            <person name="Jenkin G.A."/>
            <person name="Small P.L.C."/>
            <person name="Jones L.M."/>
            <person name="Tekaia F."/>
            <person name="Laval F."/>
            <person name="Daffe M."/>
            <person name="Parkhill J."/>
            <person name="Cole S.T."/>
        </authorList>
    </citation>
    <scope>NUCLEOTIDE SEQUENCE [LARGE SCALE GENOMIC DNA]</scope>
    <source>
        <strain>Agy99</strain>
    </source>
</reference>
<accession>A0PQ11</accession>
<dbReference type="EC" id="1.1.1.-" evidence="1"/>
<dbReference type="EMBL" id="CP000325">
    <property type="protein sequence ID" value="ABL04430.1"/>
    <property type="molecule type" value="Genomic_DNA"/>
</dbReference>
<dbReference type="RefSeq" id="WP_011740049.1">
    <property type="nucleotide sequence ID" value="NC_008611.1"/>
</dbReference>
<dbReference type="SMR" id="A0PQ11"/>
<dbReference type="KEGG" id="mul:MUL_1987"/>
<dbReference type="eggNOG" id="COG0656">
    <property type="taxonomic scope" value="Bacteria"/>
</dbReference>
<dbReference type="HOGENOM" id="CLU_023205_0_1_11"/>
<dbReference type="Proteomes" id="UP000000765">
    <property type="component" value="Chromosome"/>
</dbReference>
<dbReference type="GO" id="GO:0004033">
    <property type="term" value="F:aldo-keto reductase (NADPH) activity"/>
    <property type="evidence" value="ECO:0007669"/>
    <property type="project" value="TreeGrafter"/>
</dbReference>
<dbReference type="CDD" id="cd19134">
    <property type="entry name" value="AKR_AKR5H1"/>
    <property type="match status" value="1"/>
</dbReference>
<dbReference type="FunFam" id="3.20.20.100:FF:000002">
    <property type="entry name" value="2,5-diketo-D-gluconic acid reductase A"/>
    <property type="match status" value="1"/>
</dbReference>
<dbReference type="Gene3D" id="3.20.20.100">
    <property type="entry name" value="NADP-dependent oxidoreductase domain"/>
    <property type="match status" value="1"/>
</dbReference>
<dbReference type="InterPro" id="IPR020471">
    <property type="entry name" value="AKR"/>
</dbReference>
<dbReference type="InterPro" id="IPR018170">
    <property type="entry name" value="Aldo/ket_reductase_CS"/>
</dbReference>
<dbReference type="InterPro" id="IPR023210">
    <property type="entry name" value="NADP_OxRdtase_dom"/>
</dbReference>
<dbReference type="InterPro" id="IPR036812">
    <property type="entry name" value="NADP_OxRdtase_dom_sf"/>
</dbReference>
<dbReference type="PANTHER" id="PTHR43827">
    <property type="entry name" value="2,5-DIKETO-D-GLUCONIC ACID REDUCTASE"/>
    <property type="match status" value="1"/>
</dbReference>
<dbReference type="PANTHER" id="PTHR43827:SF3">
    <property type="entry name" value="NADP-DEPENDENT OXIDOREDUCTASE DOMAIN-CONTAINING PROTEIN"/>
    <property type="match status" value="1"/>
</dbReference>
<dbReference type="Pfam" id="PF00248">
    <property type="entry name" value="Aldo_ket_red"/>
    <property type="match status" value="1"/>
</dbReference>
<dbReference type="PIRSF" id="PIRSF000097">
    <property type="entry name" value="AKR"/>
    <property type="match status" value="1"/>
</dbReference>
<dbReference type="PRINTS" id="PR00069">
    <property type="entry name" value="ALDKETRDTASE"/>
</dbReference>
<dbReference type="SUPFAM" id="SSF51430">
    <property type="entry name" value="NAD(P)-linked oxidoreductase"/>
    <property type="match status" value="1"/>
</dbReference>
<dbReference type="PROSITE" id="PS00062">
    <property type="entry name" value="ALDOKETO_REDUCTASE_2"/>
    <property type="match status" value="1"/>
</dbReference>
<comment type="similarity">
    <text evidence="3">Belongs to the aldo/keto reductase family.</text>
</comment>
<evidence type="ECO:0000250" key="1">
    <source>
        <dbReference type="UniProtKB" id="A0QV09"/>
    </source>
</evidence>
<evidence type="ECO:0000250" key="2">
    <source>
        <dbReference type="UniProtKB" id="P80874"/>
    </source>
</evidence>
<evidence type="ECO:0000305" key="3"/>
<proteinExistence type="inferred from homology"/>
<organism>
    <name type="scientific">Mycobacterium ulcerans (strain Agy99)</name>
    <dbReference type="NCBI Taxonomy" id="362242"/>
    <lineage>
        <taxon>Bacteria</taxon>
        <taxon>Bacillati</taxon>
        <taxon>Actinomycetota</taxon>
        <taxon>Actinomycetes</taxon>
        <taxon>Mycobacteriales</taxon>
        <taxon>Mycobacteriaceae</taxon>
        <taxon>Mycobacterium</taxon>
        <taxon>Mycobacterium ulcerans group</taxon>
    </lineage>
</organism>
<keyword id="KW-0521">NADP</keyword>
<keyword id="KW-0560">Oxidoreductase</keyword>
<sequence length="282" mass="29948">MMPGAPSPSAPSIALNDENTMPVLGMGVAGLSDDETERAVSAALEIGCRLIDTAAAYGNEAAVGRALAASGIPRAELFVTTKVATADHGFTASREACKASLDRLGLDYVDLYLIHWPAPAVGKYVDAFGGLIQARGEGFTRSIGVSNFTEEHVSNVIDLTFVTPAVNQVELHPLLNQDELRKANAQHNVVTQSYTPLALGQLADNPTVTSIAGEYGKTPTQVLLRWNLQLGNAVIFGSSNAEHIVTNLDVFEFELASQHMDAINGLNDGTRLREDPMTFAGV</sequence>
<gene>
    <name type="ordered locus">MUL_1987</name>
</gene>
<feature type="chain" id="PRO_0000380749" description="Aldo-keto reductase MUL_1987">
    <location>
        <begin position="1"/>
        <end position="282"/>
    </location>
</feature>
<feature type="active site" description="Proton donor" evidence="2">
    <location>
        <position position="57"/>
    </location>
</feature>
<feature type="binding site" evidence="1">
    <location>
        <position position="197"/>
    </location>
    <ligand>
        <name>NADPH</name>
        <dbReference type="ChEBI" id="CHEBI:57783"/>
    </ligand>
</feature>
<feature type="binding site" evidence="1">
    <location>
        <position position="235"/>
    </location>
    <ligand>
        <name>NADPH</name>
        <dbReference type="ChEBI" id="CHEBI:57783"/>
    </ligand>
</feature>
<feature type="binding site" evidence="1">
    <location>
        <position position="238"/>
    </location>
    <ligand>
        <name>NADPH</name>
        <dbReference type="ChEBI" id="CHEBI:57783"/>
    </ligand>
</feature>
<feature type="binding site" evidence="1">
    <location>
        <position position="246"/>
    </location>
    <ligand>
        <name>NADPH</name>
        <dbReference type="ChEBI" id="CHEBI:57783"/>
    </ligand>
</feature>
<feature type="binding site" evidence="1">
    <location>
        <position position="247"/>
    </location>
    <ligand>
        <name>NADPH</name>
        <dbReference type="ChEBI" id="CHEBI:57783"/>
    </ligand>
</feature>
<feature type="binding site" evidence="1">
    <location>
        <position position="273"/>
    </location>
    <ligand>
        <name>NADPH</name>
        <dbReference type="ChEBI" id="CHEBI:57783"/>
    </ligand>
</feature>